<reference key="1">
    <citation type="journal article" date="1997" name="Nature">
        <title>The complete genome sequence of the hyperthermophilic, sulphate-reducing archaeon Archaeoglobus fulgidus.</title>
        <authorList>
            <person name="Klenk H.-P."/>
            <person name="Clayton R.A."/>
            <person name="Tomb J.-F."/>
            <person name="White O."/>
            <person name="Nelson K.E."/>
            <person name="Ketchum K.A."/>
            <person name="Dodson R.J."/>
            <person name="Gwinn M.L."/>
            <person name="Hickey E.K."/>
            <person name="Peterson J.D."/>
            <person name="Richardson D.L."/>
            <person name="Kerlavage A.R."/>
            <person name="Graham D.E."/>
            <person name="Kyrpides N.C."/>
            <person name="Fleischmann R.D."/>
            <person name="Quackenbush J."/>
            <person name="Lee N.H."/>
            <person name="Sutton G.G."/>
            <person name="Gill S.R."/>
            <person name="Kirkness E.F."/>
            <person name="Dougherty B.A."/>
            <person name="McKenney K."/>
            <person name="Adams M.D."/>
            <person name="Loftus B.J."/>
            <person name="Peterson S.N."/>
            <person name="Reich C.I."/>
            <person name="McNeil L.K."/>
            <person name="Badger J.H."/>
            <person name="Glodek A."/>
            <person name="Zhou L."/>
            <person name="Overbeek R."/>
            <person name="Gocayne J.D."/>
            <person name="Weidman J.F."/>
            <person name="McDonald L.A."/>
            <person name="Utterback T.R."/>
            <person name="Cotton M.D."/>
            <person name="Spriggs T."/>
            <person name="Artiach P."/>
            <person name="Kaine B.P."/>
            <person name="Sykes S.M."/>
            <person name="Sadow P.W."/>
            <person name="D'Andrea K.P."/>
            <person name="Bowman C."/>
            <person name="Fujii C."/>
            <person name="Garland S.A."/>
            <person name="Mason T.M."/>
            <person name="Olsen G.J."/>
            <person name="Fraser C.M."/>
            <person name="Smith H.O."/>
            <person name="Woese C.R."/>
            <person name="Venter J.C."/>
        </authorList>
    </citation>
    <scope>NUCLEOTIDE SEQUENCE [LARGE SCALE GENOMIC DNA]</scope>
    <source>
        <strain>ATCC 49558 / DSM 4304 / JCM 9628 / NBRC 100126 / VC-16</strain>
    </source>
</reference>
<protein>
    <recommendedName>
        <fullName>Probable cobyric acid synthase</fullName>
    </recommendedName>
</protein>
<name>COBQ_ARCFU</name>
<gene>
    <name type="primary">cobQ</name>
    <name type="synonym">cbiP</name>
    <name type="ordered locus">AF_1338</name>
</gene>
<accession>O28931</accession>
<proteinExistence type="inferred from homology"/>
<dbReference type="EMBL" id="AE000782">
    <property type="protein sequence ID" value="AAB89906.1"/>
    <property type="molecule type" value="Genomic_DNA"/>
</dbReference>
<dbReference type="PIR" id="A69417">
    <property type="entry name" value="A69417"/>
</dbReference>
<dbReference type="RefSeq" id="WP_010878835.1">
    <property type="nucleotide sequence ID" value="NC_000917.1"/>
</dbReference>
<dbReference type="STRING" id="224325.AF_1338"/>
<dbReference type="PaxDb" id="224325-AF_1338"/>
<dbReference type="EnsemblBacteria" id="AAB89906">
    <property type="protein sequence ID" value="AAB89906"/>
    <property type="gene ID" value="AF_1338"/>
</dbReference>
<dbReference type="GeneID" id="24794950"/>
<dbReference type="KEGG" id="afu:AF_1338"/>
<dbReference type="eggNOG" id="arCOG00105">
    <property type="taxonomic scope" value="Archaea"/>
</dbReference>
<dbReference type="HOGENOM" id="CLU_019250_2_2_2"/>
<dbReference type="OrthoDB" id="53136at2157"/>
<dbReference type="PhylomeDB" id="O28931"/>
<dbReference type="UniPathway" id="UPA00148"/>
<dbReference type="Proteomes" id="UP000002199">
    <property type="component" value="Chromosome"/>
</dbReference>
<dbReference type="GO" id="GO:0015420">
    <property type="term" value="F:ABC-type vitamin B12 transporter activity"/>
    <property type="evidence" value="ECO:0007669"/>
    <property type="project" value="UniProtKB-UniRule"/>
</dbReference>
<dbReference type="GO" id="GO:0003824">
    <property type="term" value="F:catalytic activity"/>
    <property type="evidence" value="ECO:0007669"/>
    <property type="project" value="InterPro"/>
</dbReference>
<dbReference type="GO" id="GO:0009236">
    <property type="term" value="P:cobalamin biosynthetic process"/>
    <property type="evidence" value="ECO:0007669"/>
    <property type="project" value="UniProtKB-UniRule"/>
</dbReference>
<dbReference type="CDD" id="cd05389">
    <property type="entry name" value="CobQ_N"/>
    <property type="match status" value="1"/>
</dbReference>
<dbReference type="CDD" id="cd01750">
    <property type="entry name" value="GATase1_CobQ"/>
    <property type="match status" value="1"/>
</dbReference>
<dbReference type="Gene3D" id="3.40.50.880">
    <property type="match status" value="1"/>
</dbReference>
<dbReference type="Gene3D" id="3.40.50.300">
    <property type="entry name" value="P-loop containing nucleotide triphosphate hydrolases"/>
    <property type="match status" value="1"/>
</dbReference>
<dbReference type="HAMAP" id="MF_00028">
    <property type="entry name" value="CobQ"/>
    <property type="match status" value="1"/>
</dbReference>
<dbReference type="InterPro" id="IPR029062">
    <property type="entry name" value="Class_I_gatase-like"/>
</dbReference>
<dbReference type="InterPro" id="IPR002586">
    <property type="entry name" value="CobQ/CobB/MinD/ParA_Nub-bd_dom"/>
</dbReference>
<dbReference type="InterPro" id="IPR033949">
    <property type="entry name" value="CobQ_GATase1"/>
</dbReference>
<dbReference type="InterPro" id="IPR047045">
    <property type="entry name" value="CobQ_N"/>
</dbReference>
<dbReference type="InterPro" id="IPR004459">
    <property type="entry name" value="CobQ_synth"/>
</dbReference>
<dbReference type="InterPro" id="IPR011698">
    <property type="entry name" value="GATase_3"/>
</dbReference>
<dbReference type="InterPro" id="IPR027417">
    <property type="entry name" value="P-loop_NTPase"/>
</dbReference>
<dbReference type="NCBIfam" id="TIGR00313">
    <property type="entry name" value="cobQ"/>
    <property type="match status" value="1"/>
</dbReference>
<dbReference type="NCBIfam" id="NF001989">
    <property type="entry name" value="PRK00784.1"/>
    <property type="match status" value="1"/>
</dbReference>
<dbReference type="PANTHER" id="PTHR21343:SF1">
    <property type="entry name" value="COBYRIC ACID SYNTHASE"/>
    <property type="match status" value="1"/>
</dbReference>
<dbReference type="PANTHER" id="PTHR21343">
    <property type="entry name" value="DETHIOBIOTIN SYNTHETASE"/>
    <property type="match status" value="1"/>
</dbReference>
<dbReference type="Pfam" id="PF01656">
    <property type="entry name" value="CbiA"/>
    <property type="match status" value="1"/>
</dbReference>
<dbReference type="Pfam" id="PF07685">
    <property type="entry name" value="GATase_3"/>
    <property type="match status" value="1"/>
</dbReference>
<dbReference type="SUPFAM" id="SSF52317">
    <property type="entry name" value="Class I glutamine amidotransferase-like"/>
    <property type="match status" value="1"/>
</dbReference>
<dbReference type="SUPFAM" id="SSF52540">
    <property type="entry name" value="P-loop containing nucleoside triphosphate hydrolases"/>
    <property type="match status" value="1"/>
</dbReference>
<dbReference type="PROSITE" id="PS51274">
    <property type="entry name" value="GATASE_COBBQ"/>
    <property type="match status" value="1"/>
</dbReference>
<sequence>MPSLMVGGTTSSAGKSLLAAAFCRILARRGYDVAPFKAQNMSLNSFVTSKGKEIAIAQAYQAFAAGIEPDERMNPVLLKPKGNFVSQLVVMGEAVGDVDSRKYYGVKVEWLKRVVEEAYLSLAEEYDFVVIEGAGGMAEINLYERDLPNIHIARFARPDILIVGDIDRGGVFASLYGTYALLPDDVKPLVKGFVINRLRGREDVLESGIRELERLTGIRVLGVLPYLDYNFPSEDSLNIEEWGAEGTVGIVRLPRVSNFTDFEPLREHARFLSLNSSLNGCEVVIIPGSKDTIADLKALKSSKLGEEIVRKAGEIPVIGICGGYQIMCRELVDMGVEHGRIRAKGLGLLDAVTEFREYRKRTVQVEKRVNGNAVILDRIRGEKVWGYEIHKGITRASNPIFEDDGCASEDGMCWGTYLHGLFWNENVLRALGGYLGIKFRQKEDWADLIADEVEGRLDLGVLGL</sequence>
<feature type="chain" id="PRO_0000141344" description="Probable cobyric acid synthase">
    <location>
        <begin position="1"/>
        <end position="464"/>
    </location>
</feature>
<feature type="domain" description="GATase cobBQ-type">
    <location>
        <begin position="245"/>
        <end position="427"/>
    </location>
</feature>
<feature type="active site" description="Nucleophile" evidence="1">
    <location>
        <position position="321"/>
    </location>
</feature>
<feature type="active site" evidence="1">
    <location>
        <position position="419"/>
    </location>
</feature>
<evidence type="ECO:0000250" key="1"/>
<evidence type="ECO:0000305" key="2"/>
<keyword id="KW-0169">Cobalamin biosynthesis</keyword>
<keyword id="KW-0315">Glutamine amidotransferase</keyword>
<keyword id="KW-1185">Reference proteome</keyword>
<organism>
    <name type="scientific">Archaeoglobus fulgidus (strain ATCC 49558 / DSM 4304 / JCM 9628 / NBRC 100126 / VC-16)</name>
    <dbReference type="NCBI Taxonomy" id="224325"/>
    <lineage>
        <taxon>Archaea</taxon>
        <taxon>Methanobacteriati</taxon>
        <taxon>Methanobacteriota</taxon>
        <taxon>Archaeoglobi</taxon>
        <taxon>Archaeoglobales</taxon>
        <taxon>Archaeoglobaceae</taxon>
        <taxon>Archaeoglobus</taxon>
    </lineage>
</organism>
<comment type="function">
    <text evidence="1">Catalyzes amidations at positions B, D, E, and G on adenosylcobyrinic A,C-diamide. NH(2) groups are provided by glutamine, and one molecule of ATP is hydrogenolyzed for each amidation (By similarity).</text>
</comment>
<comment type="pathway">
    <text>Cofactor biosynthesis; adenosylcobalamin biosynthesis.</text>
</comment>
<comment type="similarity">
    <text evidence="2">Belongs to the CobB/CobQ family. CobQ subfamily.</text>
</comment>